<organism>
    <name type="scientific">Clostridium botulinum (strain Langeland / NCTC 10281 / Type F)</name>
    <dbReference type="NCBI Taxonomy" id="441772"/>
    <lineage>
        <taxon>Bacteria</taxon>
        <taxon>Bacillati</taxon>
        <taxon>Bacillota</taxon>
        <taxon>Clostridia</taxon>
        <taxon>Eubacteriales</taxon>
        <taxon>Clostridiaceae</taxon>
        <taxon>Clostridium</taxon>
    </lineage>
</organism>
<accession>A7GAI4</accession>
<dbReference type="EC" id="4.1.1.11" evidence="1"/>
<dbReference type="EMBL" id="CP000728">
    <property type="protein sequence ID" value="ABS41717.1"/>
    <property type="molecule type" value="Genomic_DNA"/>
</dbReference>
<dbReference type="RefSeq" id="WP_003399593.1">
    <property type="nucleotide sequence ID" value="NC_009699.1"/>
</dbReference>
<dbReference type="SMR" id="A7GAI4"/>
<dbReference type="KEGG" id="cbf:CLI_0508"/>
<dbReference type="HOGENOM" id="CLU_115305_2_0_9"/>
<dbReference type="UniPathway" id="UPA00028">
    <property type="reaction ID" value="UER00002"/>
</dbReference>
<dbReference type="Proteomes" id="UP000002410">
    <property type="component" value="Chromosome"/>
</dbReference>
<dbReference type="GO" id="GO:0005829">
    <property type="term" value="C:cytosol"/>
    <property type="evidence" value="ECO:0007669"/>
    <property type="project" value="TreeGrafter"/>
</dbReference>
<dbReference type="GO" id="GO:0004068">
    <property type="term" value="F:aspartate 1-decarboxylase activity"/>
    <property type="evidence" value="ECO:0007669"/>
    <property type="project" value="UniProtKB-UniRule"/>
</dbReference>
<dbReference type="GO" id="GO:0006523">
    <property type="term" value="P:alanine biosynthetic process"/>
    <property type="evidence" value="ECO:0007669"/>
    <property type="project" value="InterPro"/>
</dbReference>
<dbReference type="GO" id="GO:0015940">
    <property type="term" value="P:pantothenate biosynthetic process"/>
    <property type="evidence" value="ECO:0007669"/>
    <property type="project" value="UniProtKB-UniRule"/>
</dbReference>
<dbReference type="CDD" id="cd06919">
    <property type="entry name" value="Asp_decarbox"/>
    <property type="match status" value="1"/>
</dbReference>
<dbReference type="Gene3D" id="2.40.40.20">
    <property type="match status" value="1"/>
</dbReference>
<dbReference type="HAMAP" id="MF_00446">
    <property type="entry name" value="PanD"/>
    <property type="match status" value="1"/>
</dbReference>
<dbReference type="InterPro" id="IPR009010">
    <property type="entry name" value="Asp_de-COase-like_dom_sf"/>
</dbReference>
<dbReference type="InterPro" id="IPR003190">
    <property type="entry name" value="Asp_decarbox"/>
</dbReference>
<dbReference type="NCBIfam" id="TIGR00223">
    <property type="entry name" value="panD"/>
    <property type="match status" value="1"/>
</dbReference>
<dbReference type="PANTHER" id="PTHR21012">
    <property type="entry name" value="ASPARTATE 1-DECARBOXYLASE"/>
    <property type="match status" value="1"/>
</dbReference>
<dbReference type="PANTHER" id="PTHR21012:SF0">
    <property type="entry name" value="ASPARTATE 1-DECARBOXYLASE"/>
    <property type="match status" value="1"/>
</dbReference>
<dbReference type="Pfam" id="PF02261">
    <property type="entry name" value="Asp_decarbox"/>
    <property type="match status" value="1"/>
</dbReference>
<dbReference type="PIRSF" id="PIRSF006246">
    <property type="entry name" value="Asp_decarbox"/>
    <property type="match status" value="1"/>
</dbReference>
<dbReference type="SUPFAM" id="SSF50692">
    <property type="entry name" value="ADC-like"/>
    <property type="match status" value="1"/>
</dbReference>
<sequence>MTITMLKSKIHRATVTEANLNYVGSITIDKYLMDKANILEYEKVQIVDIDNGNRFETYVIAGEKHSGVICLNGAAARMVQKGDKIIIMSYCSLTIDEANKFNPTVLFVDNKNNIEKLTNYEKHGEII</sequence>
<protein>
    <recommendedName>
        <fullName evidence="1">Aspartate 1-decarboxylase</fullName>
        <ecNumber evidence="1">4.1.1.11</ecNumber>
    </recommendedName>
    <alternativeName>
        <fullName evidence="1">Aspartate alpha-decarboxylase</fullName>
    </alternativeName>
    <component>
        <recommendedName>
            <fullName evidence="1">Aspartate 1-decarboxylase beta chain</fullName>
        </recommendedName>
    </component>
    <component>
        <recommendedName>
            <fullName evidence="1">Aspartate 1-decarboxylase alpha chain</fullName>
        </recommendedName>
    </component>
</protein>
<evidence type="ECO:0000255" key="1">
    <source>
        <dbReference type="HAMAP-Rule" id="MF_00446"/>
    </source>
</evidence>
<name>PAND_CLOBL</name>
<comment type="function">
    <text evidence="1">Catalyzes the pyruvoyl-dependent decarboxylation of aspartate to produce beta-alanine.</text>
</comment>
<comment type="catalytic activity">
    <reaction evidence="1">
        <text>L-aspartate + H(+) = beta-alanine + CO2</text>
        <dbReference type="Rhea" id="RHEA:19497"/>
        <dbReference type="ChEBI" id="CHEBI:15378"/>
        <dbReference type="ChEBI" id="CHEBI:16526"/>
        <dbReference type="ChEBI" id="CHEBI:29991"/>
        <dbReference type="ChEBI" id="CHEBI:57966"/>
        <dbReference type="EC" id="4.1.1.11"/>
    </reaction>
</comment>
<comment type="cofactor">
    <cofactor evidence="1">
        <name>pyruvate</name>
        <dbReference type="ChEBI" id="CHEBI:15361"/>
    </cofactor>
    <text evidence="1">Binds 1 pyruvoyl group covalently per subunit.</text>
</comment>
<comment type="pathway">
    <text evidence="1">Cofactor biosynthesis; (R)-pantothenate biosynthesis; beta-alanine from L-aspartate: step 1/1.</text>
</comment>
<comment type="subunit">
    <text evidence="1">Heterooctamer of four alpha and four beta subunits.</text>
</comment>
<comment type="subcellular location">
    <subcellularLocation>
        <location evidence="1">Cytoplasm</location>
    </subcellularLocation>
</comment>
<comment type="PTM">
    <text evidence="1">Is synthesized initially as an inactive proenzyme, which is activated by self-cleavage at a specific serine bond to produce a beta-subunit with a hydroxyl group at its C-terminus and an alpha-subunit with a pyruvoyl group at its N-terminus.</text>
</comment>
<comment type="similarity">
    <text evidence="1">Belongs to the PanD family.</text>
</comment>
<gene>
    <name evidence="1" type="primary">panD</name>
    <name type="ordered locus">CLI_0508</name>
</gene>
<feature type="chain" id="PRO_1000026173" description="Aspartate 1-decarboxylase beta chain" evidence="1">
    <location>
        <begin position="1"/>
        <end position="24"/>
    </location>
</feature>
<feature type="chain" id="PRO_0000316064" description="Aspartate 1-decarboxylase alpha chain" evidence="1">
    <location>
        <begin position="25"/>
        <end position="127"/>
    </location>
</feature>
<feature type="active site" description="Schiff-base intermediate with substrate; via pyruvic acid" evidence="1">
    <location>
        <position position="25"/>
    </location>
</feature>
<feature type="active site" description="Proton donor" evidence="1">
    <location>
        <position position="58"/>
    </location>
</feature>
<feature type="binding site" evidence="1">
    <location>
        <position position="57"/>
    </location>
    <ligand>
        <name>substrate</name>
    </ligand>
</feature>
<feature type="binding site" evidence="1">
    <location>
        <begin position="73"/>
        <end position="75"/>
    </location>
    <ligand>
        <name>substrate</name>
    </ligand>
</feature>
<feature type="modified residue" description="Pyruvic acid (Ser)" evidence="1">
    <location>
        <position position="25"/>
    </location>
</feature>
<keyword id="KW-0068">Autocatalytic cleavage</keyword>
<keyword id="KW-0963">Cytoplasm</keyword>
<keyword id="KW-0210">Decarboxylase</keyword>
<keyword id="KW-0456">Lyase</keyword>
<keyword id="KW-0566">Pantothenate biosynthesis</keyword>
<keyword id="KW-0670">Pyruvate</keyword>
<keyword id="KW-0704">Schiff base</keyword>
<keyword id="KW-0865">Zymogen</keyword>
<proteinExistence type="inferred from homology"/>
<reference key="1">
    <citation type="submission" date="2007-06" db="EMBL/GenBank/DDBJ databases">
        <authorList>
            <person name="Brinkac L.M."/>
            <person name="Daugherty S."/>
            <person name="Dodson R.J."/>
            <person name="Madupu R."/>
            <person name="Brown J.L."/>
            <person name="Bruce D."/>
            <person name="Detter C."/>
            <person name="Munk C."/>
            <person name="Smith L.A."/>
            <person name="Smith T.J."/>
            <person name="White O."/>
            <person name="Brettin T.S."/>
        </authorList>
    </citation>
    <scope>NUCLEOTIDE SEQUENCE [LARGE SCALE GENOMIC DNA]</scope>
    <source>
        <strain>Langeland / NCTC 10281 / Type F</strain>
    </source>
</reference>